<feature type="chain" id="PRO_0000200714" description="Probable protein kinase UbiB">
    <location>
        <begin position="1"/>
        <end position="533"/>
    </location>
</feature>
<feature type="transmembrane region" description="Helical" evidence="1">
    <location>
        <begin position="24"/>
        <end position="44"/>
    </location>
</feature>
<feature type="transmembrane region" description="Helical" evidence="1">
    <location>
        <begin position="510"/>
        <end position="530"/>
    </location>
</feature>
<feature type="domain" description="Protein kinase" evidence="1">
    <location>
        <begin position="126"/>
        <end position="494"/>
    </location>
</feature>
<feature type="active site" description="Proton acceptor" evidence="1">
    <location>
        <position position="289"/>
    </location>
</feature>
<feature type="binding site" evidence="1">
    <location>
        <begin position="132"/>
        <end position="140"/>
    </location>
    <ligand>
        <name>ATP</name>
        <dbReference type="ChEBI" id="CHEBI:30616"/>
    </ligand>
</feature>
<feature type="binding site" evidence="1">
    <location>
        <position position="154"/>
    </location>
    <ligand>
        <name>ATP</name>
        <dbReference type="ChEBI" id="CHEBI:30616"/>
    </ligand>
</feature>
<sequence>MKLLAVRRLLRIQRVVIRYRLDDLILELPMLPWWLRLLGATLPWRWLPRRKLELTRGARLRLALQDLGPIFIKFGQILSTRRDLLPDDIANELAWLQDKVPPFPPELAVKRIEEQLGAKIEQVFARFEREPLASASVAQVHAARLKSGEEVVVKVIRPNLEPVIRSDIAWLFILARLAERVSSEARRLHPVEVVSDYEKTIVDELDLLREAANASQLRRNFEGSPLLYVPQVYWDWCRPKVLVMERIYGIPVTDLETLRDQRTDFKALAERGVEIFFTQVFRDSFFHADMHPGNIFVSTRAPWSPQYIAVDCGIVGSLTDEDQDYLARNLIAFFKRDYRKVAQLHIDSGWVPAETKVNDFEAAIRTVCEPIFEKPLKDISFGQVLLRLFQTARRFNMEIQPQLVLLQKTLLNIEGLGRQLYPELDLWATAQPFLERWMRERVSPKQLLRNFQQQVEQVPHLSQMARDTLERLSQPHAHNAPPPEWKGSRHDWLGRLVGAVLLVGAAEVGLGQQLEAWPAWVMLAGGVFLILRR</sequence>
<organism>
    <name type="scientific">Pseudomonas aeruginosa (strain ATCC 15692 / DSM 22644 / CIP 104116 / JCM 14847 / LMG 12228 / 1C / PRS 101 / PAO1)</name>
    <dbReference type="NCBI Taxonomy" id="208964"/>
    <lineage>
        <taxon>Bacteria</taxon>
        <taxon>Pseudomonadati</taxon>
        <taxon>Pseudomonadota</taxon>
        <taxon>Gammaproteobacteria</taxon>
        <taxon>Pseudomonadales</taxon>
        <taxon>Pseudomonadaceae</taxon>
        <taxon>Pseudomonas</taxon>
    </lineage>
</organism>
<proteinExistence type="inferred from homology"/>
<gene>
    <name evidence="1" type="primary">ubiB</name>
    <name type="ordered locus">PA5065</name>
</gene>
<name>UBIB_PSEAE</name>
<comment type="function">
    <text evidence="1">Is probably a protein kinase regulator of UbiI activity which is involved in aerobic coenzyme Q (ubiquinone) biosynthesis.</text>
</comment>
<comment type="pathway">
    <text>Cofactor biosynthesis; ubiquinone biosynthesis [regulation].</text>
</comment>
<comment type="subcellular location">
    <subcellularLocation>
        <location evidence="1">Cell inner membrane</location>
        <topology evidence="1">Multi-pass membrane protein</topology>
    </subcellularLocation>
</comment>
<comment type="similarity">
    <text evidence="1">Belongs to the ABC1 family. UbiB subfamily.</text>
</comment>
<reference key="1">
    <citation type="journal article" date="2000" name="Nature">
        <title>Complete genome sequence of Pseudomonas aeruginosa PAO1, an opportunistic pathogen.</title>
        <authorList>
            <person name="Stover C.K."/>
            <person name="Pham X.-Q.T."/>
            <person name="Erwin A.L."/>
            <person name="Mizoguchi S.D."/>
            <person name="Warrener P."/>
            <person name="Hickey M.J."/>
            <person name="Brinkman F.S.L."/>
            <person name="Hufnagle W.O."/>
            <person name="Kowalik D.J."/>
            <person name="Lagrou M."/>
            <person name="Garber R.L."/>
            <person name="Goltry L."/>
            <person name="Tolentino E."/>
            <person name="Westbrock-Wadman S."/>
            <person name="Yuan Y."/>
            <person name="Brody L.L."/>
            <person name="Coulter S.N."/>
            <person name="Folger K.R."/>
            <person name="Kas A."/>
            <person name="Larbig K."/>
            <person name="Lim R.M."/>
            <person name="Smith K.A."/>
            <person name="Spencer D.H."/>
            <person name="Wong G.K.-S."/>
            <person name="Wu Z."/>
            <person name="Paulsen I.T."/>
            <person name="Reizer J."/>
            <person name="Saier M.H. Jr."/>
            <person name="Hancock R.E.W."/>
            <person name="Lory S."/>
            <person name="Olson M.V."/>
        </authorList>
    </citation>
    <scope>NUCLEOTIDE SEQUENCE [LARGE SCALE GENOMIC DNA]</scope>
    <source>
        <strain>ATCC 15692 / DSM 22644 / CIP 104116 / JCM 14847 / LMG 12228 / 1C / PRS 101 / PAO1</strain>
    </source>
</reference>
<evidence type="ECO:0000255" key="1">
    <source>
        <dbReference type="HAMAP-Rule" id="MF_00414"/>
    </source>
</evidence>
<keyword id="KW-0067">ATP-binding</keyword>
<keyword id="KW-0997">Cell inner membrane</keyword>
<keyword id="KW-1003">Cell membrane</keyword>
<keyword id="KW-0418">Kinase</keyword>
<keyword id="KW-0472">Membrane</keyword>
<keyword id="KW-0547">Nucleotide-binding</keyword>
<keyword id="KW-1185">Reference proteome</keyword>
<keyword id="KW-0808">Transferase</keyword>
<keyword id="KW-0812">Transmembrane</keyword>
<keyword id="KW-1133">Transmembrane helix</keyword>
<keyword id="KW-0831">Ubiquinone biosynthesis</keyword>
<dbReference type="EC" id="2.7.-.-" evidence="1"/>
<dbReference type="EMBL" id="AE004091">
    <property type="protein sequence ID" value="AAG08450.1"/>
    <property type="molecule type" value="Genomic_DNA"/>
</dbReference>
<dbReference type="PIR" id="D83014">
    <property type="entry name" value="D83014"/>
</dbReference>
<dbReference type="RefSeq" id="NP_253752.1">
    <property type="nucleotide sequence ID" value="NC_002516.2"/>
</dbReference>
<dbReference type="RefSeq" id="WP_003095885.1">
    <property type="nucleotide sequence ID" value="NZ_QZGE01000002.1"/>
</dbReference>
<dbReference type="SMR" id="Q9HUB8"/>
<dbReference type="FunCoup" id="Q9HUB8">
    <property type="interactions" value="444"/>
</dbReference>
<dbReference type="STRING" id="208964.PA5065"/>
<dbReference type="PaxDb" id="208964-PA5065"/>
<dbReference type="GeneID" id="878018"/>
<dbReference type="KEGG" id="pae:PA5065"/>
<dbReference type="PATRIC" id="fig|208964.12.peg.5309"/>
<dbReference type="PseudoCAP" id="PA5065"/>
<dbReference type="HOGENOM" id="CLU_006533_0_0_6"/>
<dbReference type="InParanoid" id="Q9HUB8"/>
<dbReference type="OrthoDB" id="9795390at2"/>
<dbReference type="PhylomeDB" id="Q9HUB8"/>
<dbReference type="BioCyc" id="PAER208964:G1FZ6-5181-MONOMER"/>
<dbReference type="UniPathway" id="UPA00232"/>
<dbReference type="Proteomes" id="UP000002438">
    <property type="component" value="Chromosome"/>
</dbReference>
<dbReference type="GO" id="GO:0005886">
    <property type="term" value="C:plasma membrane"/>
    <property type="evidence" value="ECO:0007669"/>
    <property type="project" value="UniProtKB-SubCell"/>
</dbReference>
<dbReference type="GO" id="GO:0005524">
    <property type="term" value="F:ATP binding"/>
    <property type="evidence" value="ECO:0007669"/>
    <property type="project" value="UniProtKB-KW"/>
</dbReference>
<dbReference type="GO" id="GO:0004672">
    <property type="term" value="F:protein kinase activity"/>
    <property type="evidence" value="ECO:0007669"/>
    <property type="project" value="UniProtKB-UniRule"/>
</dbReference>
<dbReference type="GO" id="GO:0010795">
    <property type="term" value="P:regulation of ubiquinone biosynthetic process"/>
    <property type="evidence" value="ECO:0007669"/>
    <property type="project" value="UniProtKB-UniRule"/>
</dbReference>
<dbReference type="GO" id="GO:0006744">
    <property type="term" value="P:ubiquinone biosynthetic process"/>
    <property type="evidence" value="ECO:0007669"/>
    <property type="project" value="UniProtKB-UniPathway"/>
</dbReference>
<dbReference type="CDD" id="cd13972">
    <property type="entry name" value="UbiB"/>
    <property type="match status" value="1"/>
</dbReference>
<dbReference type="HAMAP" id="MF_00414">
    <property type="entry name" value="UbiB"/>
    <property type="match status" value="1"/>
</dbReference>
<dbReference type="InterPro" id="IPR004147">
    <property type="entry name" value="ABC1_dom"/>
</dbReference>
<dbReference type="InterPro" id="IPR011009">
    <property type="entry name" value="Kinase-like_dom_sf"/>
</dbReference>
<dbReference type="InterPro" id="IPR010232">
    <property type="entry name" value="UbiB"/>
</dbReference>
<dbReference type="InterPro" id="IPR045308">
    <property type="entry name" value="UbiB_bact"/>
</dbReference>
<dbReference type="InterPro" id="IPR050154">
    <property type="entry name" value="UbiB_kinase"/>
</dbReference>
<dbReference type="NCBIfam" id="NF003404">
    <property type="entry name" value="PRK04750.1"/>
    <property type="match status" value="1"/>
</dbReference>
<dbReference type="NCBIfam" id="TIGR01982">
    <property type="entry name" value="UbiB"/>
    <property type="match status" value="1"/>
</dbReference>
<dbReference type="PANTHER" id="PTHR10566">
    <property type="entry name" value="CHAPERONE-ACTIVITY OF BC1 COMPLEX CABC1 -RELATED"/>
    <property type="match status" value="1"/>
</dbReference>
<dbReference type="PANTHER" id="PTHR10566:SF113">
    <property type="entry name" value="PROTEIN ACTIVITY OF BC1 COMPLEX KINASE 7, CHLOROPLASTIC"/>
    <property type="match status" value="1"/>
</dbReference>
<dbReference type="Pfam" id="PF03109">
    <property type="entry name" value="ABC1"/>
    <property type="match status" value="1"/>
</dbReference>
<dbReference type="SUPFAM" id="SSF56112">
    <property type="entry name" value="Protein kinase-like (PK-like)"/>
    <property type="match status" value="1"/>
</dbReference>
<protein>
    <recommendedName>
        <fullName evidence="1">Probable protein kinase UbiB</fullName>
        <ecNumber evidence="1">2.7.-.-</ecNumber>
    </recommendedName>
    <alternativeName>
        <fullName evidence="1">Ubiquinone biosynthesis protein UbiB</fullName>
    </alternativeName>
</protein>
<accession>Q9HUB8</accession>